<gene>
    <name type="primary">C/VIF2</name>
    <name type="synonym">CIF2</name>
    <name type="synonym">VIF2</name>
    <name type="ordered locus">At5g64620</name>
    <name type="ORF">MUB3.14</name>
</gene>
<feature type="signal peptide" evidence="2">
    <location>
        <begin position="1"/>
        <end position="23"/>
    </location>
</feature>
<feature type="chain" id="PRO_5000147151" description="Cell wall / vacuolar inhibitor of fructosidase 2">
    <location>
        <begin position="24"/>
        <end position="180"/>
    </location>
</feature>
<feature type="glycosylation site" description="N-linked (GlcNAc...) asparagine" evidence="2">
    <location>
        <position position="26"/>
    </location>
</feature>
<feature type="glycosylation site" description="N-linked (GlcNAc...) asparagine" evidence="2">
    <location>
        <position position="73"/>
    </location>
</feature>
<feature type="glycosylation site" description="N-linked (GlcNAc...) asparagine" evidence="2">
    <location>
        <position position="84"/>
    </location>
</feature>
<feature type="disulfide bond" evidence="1">
    <location>
        <begin position="35"/>
        <end position="44"/>
    </location>
</feature>
<feature type="disulfide bond" evidence="1">
    <location>
        <begin position="101"/>
        <end position="141"/>
    </location>
</feature>
<dbReference type="EMBL" id="Y12807">
    <property type="protein sequence ID" value="CAA73335.1"/>
    <property type="molecule type" value="mRNA"/>
</dbReference>
<dbReference type="EMBL" id="AB010076">
    <property type="protein sequence ID" value="BAB11429.1"/>
    <property type="molecule type" value="Genomic_DNA"/>
</dbReference>
<dbReference type="EMBL" id="CP002688">
    <property type="protein sequence ID" value="AED97927.1"/>
    <property type="molecule type" value="Genomic_DNA"/>
</dbReference>
<dbReference type="EMBL" id="BT003882">
    <property type="protein sequence ID" value="AAO41931.1"/>
    <property type="molecule type" value="mRNA"/>
</dbReference>
<dbReference type="EMBL" id="BT004919">
    <property type="protein sequence ID" value="AAO50452.1"/>
    <property type="molecule type" value="mRNA"/>
</dbReference>
<dbReference type="EMBL" id="AY086575">
    <property type="protein sequence ID" value="AAM63637.1"/>
    <property type="molecule type" value="mRNA"/>
</dbReference>
<dbReference type="RefSeq" id="NP_201267.1">
    <property type="nucleotide sequence ID" value="NM_125858.4"/>
</dbReference>
<dbReference type="SMR" id="O49603"/>
<dbReference type="BioGRID" id="21825">
    <property type="interactions" value="1"/>
</dbReference>
<dbReference type="FunCoup" id="O49603">
    <property type="interactions" value="84"/>
</dbReference>
<dbReference type="STRING" id="3702.O49603"/>
<dbReference type="GlyCosmos" id="O49603">
    <property type="glycosylation" value="3 sites, No reported glycans"/>
</dbReference>
<dbReference type="GlyGen" id="O49603">
    <property type="glycosylation" value="3 sites"/>
</dbReference>
<dbReference type="iPTMnet" id="O49603"/>
<dbReference type="PaxDb" id="3702-AT5G64620.1"/>
<dbReference type="ProteomicsDB" id="220324"/>
<dbReference type="EnsemblPlants" id="AT5G64620.1">
    <property type="protein sequence ID" value="AT5G64620.1"/>
    <property type="gene ID" value="AT5G64620"/>
</dbReference>
<dbReference type="GeneID" id="836583"/>
<dbReference type="Gramene" id="AT5G64620.1">
    <property type="protein sequence ID" value="AT5G64620.1"/>
    <property type="gene ID" value="AT5G64620"/>
</dbReference>
<dbReference type="KEGG" id="ath:AT5G64620"/>
<dbReference type="Araport" id="AT5G64620"/>
<dbReference type="TAIR" id="AT5G64620">
    <property type="gene designation" value="C/VIF2"/>
</dbReference>
<dbReference type="eggNOG" id="ENOG502RXIR">
    <property type="taxonomic scope" value="Eukaryota"/>
</dbReference>
<dbReference type="HOGENOM" id="CLU_033761_5_1_1"/>
<dbReference type="InParanoid" id="O49603"/>
<dbReference type="OMA" id="YDYAYLH"/>
<dbReference type="OrthoDB" id="773291at2759"/>
<dbReference type="PhylomeDB" id="O49603"/>
<dbReference type="PRO" id="PR:O49603"/>
<dbReference type="Proteomes" id="UP000006548">
    <property type="component" value="Chromosome 5"/>
</dbReference>
<dbReference type="ExpressionAtlas" id="O49603">
    <property type="expression patterns" value="baseline and differential"/>
</dbReference>
<dbReference type="GO" id="GO:0005773">
    <property type="term" value="C:vacuole"/>
    <property type="evidence" value="ECO:0007669"/>
    <property type="project" value="UniProtKB-SubCell"/>
</dbReference>
<dbReference type="GO" id="GO:0004857">
    <property type="term" value="F:enzyme inhibitor activity"/>
    <property type="evidence" value="ECO:0000314"/>
    <property type="project" value="UniProtKB"/>
</dbReference>
<dbReference type="GO" id="GO:0043086">
    <property type="term" value="P:negative regulation of catalytic activity"/>
    <property type="evidence" value="ECO:0000314"/>
    <property type="project" value="UniProtKB"/>
</dbReference>
<dbReference type="CDD" id="cd14859">
    <property type="entry name" value="PMEI_like"/>
    <property type="match status" value="1"/>
</dbReference>
<dbReference type="FunFam" id="1.20.140.40:FF:000011">
    <property type="entry name" value="Cell wall / vacuolar inhibitor of fructosidase 2"/>
    <property type="match status" value="1"/>
</dbReference>
<dbReference type="Gene3D" id="1.20.140.40">
    <property type="entry name" value="Invertase/pectin methylesterase inhibitor family protein"/>
    <property type="match status" value="1"/>
</dbReference>
<dbReference type="InterPro" id="IPR035513">
    <property type="entry name" value="Invertase/methylesterase_inhib"/>
</dbReference>
<dbReference type="InterPro" id="IPR006501">
    <property type="entry name" value="Pectinesterase_inhib_dom"/>
</dbReference>
<dbReference type="NCBIfam" id="TIGR01614">
    <property type="entry name" value="PME_inhib"/>
    <property type="match status" value="1"/>
</dbReference>
<dbReference type="PANTHER" id="PTHR35357:SF8">
    <property type="entry name" value="OS01G0111000 PROTEIN"/>
    <property type="match status" value="1"/>
</dbReference>
<dbReference type="PANTHER" id="PTHR35357">
    <property type="entry name" value="OS02G0537100 PROTEIN"/>
    <property type="match status" value="1"/>
</dbReference>
<dbReference type="Pfam" id="PF04043">
    <property type="entry name" value="PMEI"/>
    <property type="match status" value="1"/>
</dbReference>
<dbReference type="SMART" id="SM00856">
    <property type="entry name" value="PMEI"/>
    <property type="match status" value="1"/>
</dbReference>
<dbReference type="SUPFAM" id="SSF101148">
    <property type="entry name" value="Plant invertase/pectin methylesterase inhibitor"/>
    <property type="match status" value="1"/>
</dbReference>
<organism>
    <name type="scientific">Arabidopsis thaliana</name>
    <name type="common">Mouse-ear cress</name>
    <dbReference type="NCBI Taxonomy" id="3702"/>
    <lineage>
        <taxon>Eukaryota</taxon>
        <taxon>Viridiplantae</taxon>
        <taxon>Streptophyta</taxon>
        <taxon>Embryophyta</taxon>
        <taxon>Tracheophyta</taxon>
        <taxon>Spermatophyta</taxon>
        <taxon>Magnoliopsida</taxon>
        <taxon>eudicotyledons</taxon>
        <taxon>Gunneridae</taxon>
        <taxon>Pentapetalae</taxon>
        <taxon>rosids</taxon>
        <taxon>malvids</taxon>
        <taxon>Brassicales</taxon>
        <taxon>Brassicaceae</taxon>
        <taxon>Camelineae</taxon>
        <taxon>Arabidopsis</taxon>
    </lineage>
</organism>
<protein>
    <recommendedName>
        <fullName>Cell wall / vacuolar inhibitor of fructosidase 2</fullName>
        <shortName>AtC/VIF2</shortName>
    </recommendedName>
</protein>
<keyword id="KW-1015">Disulfide bond</keyword>
<keyword id="KW-0325">Glycoprotein</keyword>
<keyword id="KW-1185">Reference proteome</keyword>
<keyword id="KW-0732">Signal</keyword>
<keyword id="KW-0926">Vacuole</keyword>
<proteinExistence type="evidence at protein level"/>
<accession>O49603</accession>
<evidence type="ECO:0000250" key="1"/>
<evidence type="ECO:0000255" key="2"/>
<evidence type="ECO:0000269" key="3">
    <source>
    </source>
</evidence>
<evidence type="ECO:0000269" key="4">
    <source>
    </source>
</evidence>
<evidence type="ECO:0000305" key="5"/>
<reference key="1">
    <citation type="submission" date="1997-04" db="EMBL/GenBank/DDBJ databases">
        <authorList>
            <person name="Greiner S."/>
            <person name="Krausgrill S."/>
            <person name="Rausch T."/>
        </authorList>
    </citation>
    <scope>NUCLEOTIDE SEQUENCE [MRNA]</scope>
</reference>
<reference key="2">
    <citation type="journal article" date="1998" name="DNA Res.">
        <title>Structural analysis of Arabidopsis thaliana chromosome 5. IV. Sequence features of the regions of 1,456,315 bp covered by nineteen physically assigned P1 and TAC clones.</title>
        <authorList>
            <person name="Sato S."/>
            <person name="Kaneko T."/>
            <person name="Kotani H."/>
            <person name="Nakamura Y."/>
            <person name="Asamizu E."/>
            <person name="Miyajima N."/>
            <person name="Tabata S."/>
        </authorList>
    </citation>
    <scope>NUCLEOTIDE SEQUENCE [LARGE SCALE GENOMIC DNA]</scope>
    <source>
        <strain>cv. Columbia</strain>
    </source>
</reference>
<reference key="3">
    <citation type="journal article" date="2017" name="Plant J.">
        <title>Araport11: a complete reannotation of the Arabidopsis thaliana reference genome.</title>
        <authorList>
            <person name="Cheng C.Y."/>
            <person name="Krishnakumar V."/>
            <person name="Chan A.P."/>
            <person name="Thibaud-Nissen F."/>
            <person name="Schobel S."/>
            <person name="Town C.D."/>
        </authorList>
    </citation>
    <scope>GENOME REANNOTATION</scope>
    <source>
        <strain>cv. Columbia</strain>
    </source>
</reference>
<reference key="4">
    <citation type="journal article" date="2003" name="Science">
        <title>Empirical analysis of transcriptional activity in the Arabidopsis genome.</title>
        <authorList>
            <person name="Yamada K."/>
            <person name="Lim J."/>
            <person name="Dale J.M."/>
            <person name="Chen H."/>
            <person name="Shinn P."/>
            <person name="Palm C.J."/>
            <person name="Southwick A.M."/>
            <person name="Wu H.C."/>
            <person name="Kim C.J."/>
            <person name="Nguyen M."/>
            <person name="Pham P.K."/>
            <person name="Cheuk R.F."/>
            <person name="Karlin-Newmann G."/>
            <person name="Liu S.X."/>
            <person name="Lam B."/>
            <person name="Sakano H."/>
            <person name="Wu T."/>
            <person name="Yu G."/>
            <person name="Miranda M."/>
            <person name="Quach H.L."/>
            <person name="Tripp M."/>
            <person name="Chang C.H."/>
            <person name="Lee J.M."/>
            <person name="Toriumi M.J."/>
            <person name="Chan M.M."/>
            <person name="Tang C.C."/>
            <person name="Onodera C.S."/>
            <person name="Deng J.M."/>
            <person name="Akiyama K."/>
            <person name="Ansari Y."/>
            <person name="Arakawa T."/>
            <person name="Banh J."/>
            <person name="Banno F."/>
            <person name="Bowser L."/>
            <person name="Brooks S.Y."/>
            <person name="Carninci P."/>
            <person name="Chao Q."/>
            <person name="Choy N."/>
            <person name="Enju A."/>
            <person name="Goldsmith A.D."/>
            <person name="Gurjal M."/>
            <person name="Hansen N.F."/>
            <person name="Hayashizaki Y."/>
            <person name="Johnson-Hopson C."/>
            <person name="Hsuan V.W."/>
            <person name="Iida K."/>
            <person name="Karnes M."/>
            <person name="Khan S."/>
            <person name="Koesema E."/>
            <person name="Ishida J."/>
            <person name="Jiang P.X."/>
            <person name="Jones T."/>
            <person name="Kawai J."/>
            <person name="Kamiya A."/>
            <person name="Meyers C."/>
            <person name="Nakajima M."/>
            <person name="Narusaka M."/>
            <person name="Seki M."/>
            <person name="Sakurai T."/>
            <person name="Satou M."/>
            <person name="Tamse R."/>
            <person name="Vaysberg M."/>
            <person name="Wallender E.K."/>
            <person name="Wong C."/>
            <person name="Yamamura Y."/>
            <person name="Yuan S."/>
            <person name="Shinozaki K."/>
            <person name="Davis R.W."/>
            <person name="Theologis A."/>
            <person name="Ecker J.R."/>
        </authorList>
    </citation>
    <scope>NUCLEOTIDE SEQUENCE [LARGE SCALE MRNA]</scope>
    <source>
        <strain>cv. Columbia</strain>
    </source>
</reference>
<reference key="5">
    <citation type="submission" date="2002-03" db="EMBL/GenBank/DDBJ databases">
        <title>Full-length cDNA from Arabidopsis thaliana.</title>
        <authorList>
            <person name="Brover V.V."/>
            <person name="Troukhan M.E."/>
            <person name="Alexandrov N.A."/>
            <person name="Lu Y.-P."/>
            <person name="Flavell R.B."/>
            <person name="Feldmann K.A."/>
        </authorList>
    </citation>
    <scope>NUCLEOTIDE SEQUENCE [LARGE SCALE MRNA]</scope>
</reference>
<reference key="6">
    <citation type="journal article" date="2004" name="Biochim. Biophys. Acta">
        <title>Plant protein inhibitors of invertases.</title>
        <authorList>
            <person name="Rausch T."/>
            <person name="Greiner S."/>
        </authorList>
    </citation>
    <scope>FUNCTION</scope>
</reference>
<reference key="7">
    <citation type="journal article" date="2004" name="FEBS Lett.">
        <title>In Arabidopsis thaliana, the invertase inhibitors AtC/VIF1 and 2 exhibit distinct target enzyme specificities and expression profiles.</title>
        <authorList>
            <person name="Link M."/>
            <person name="Rausch T."/>
            <person name="Greiner S."/>
        </authorList>
    </citation>
    <scope>FUNCTION</scope>
    <scope>TISSUE SPECIFICITY</scope>
    <scope>DISULFIDE BOND</scope>
    <scope>GENE FAMILY</scope>
    <scope>NOMENCLATURE</scope>
    <source>
        <strain>cv. Wassilewskija</strain>
    </source>
</reference>
<name>CVIF2_ARATH</name>
<comment type="function">
    <text evidence="3 4">Inhibits fructosidases from both cell wall (cell wall invertase CWI) and vacuoles (vacuolar invertase VI).</text>
</comment>
<comment type="subcellular location">
    <subcellularLocation>
        <location evidence="5">Vacuole</location>
    </subcellularLocation>
</comment>
<comment type="tissue specificity">
    <text evidence="4">Mostly expressed at low levels in seedlings, stems, leaves and flowers (in all organs), and, to a lower extent, in roots and siliques.</text>
</comment>
<comment type="similarity">
    <text evidence="5">Belongs to the PMEI family.</text>
</comment>
<sequence length="180" mass="19634">MASSLIFLLLVTLTFSASTLISAKSNTTTIIESTCKTTNYYKFCVSALKSDPRSPTADTKGLASIMVGVGMTNATSTANYIAGNLSATVKDTVLKKVLQDCSEKYALAADSLRLTIQDLDDEAYDYASMHVLAAQDYPNVCRNIFRRVKGLAYPVEIRRREASLRRICGVVSGILDRLVE</sequence>